<accession>Q5RFT9</accession>
<feature type="chain" id="PRO_0000079458" description="Nucleolar protein 4-like">
    <location>
        <begin position="1"/>
        <end position="436"/>
    </location>
</feature>
<feature type="region of interest" description="Disordered" evidence="2">
    <location>
        <begin position="1"/>
        <end position="184"/>
    </location>
</feature>
<feature type="region of interest" description="Disordered" evidence="2">
    <location>
        <begin position="351"/>
        <end position="400"/>
    </location>
</feature>
<feature type="compositionally biased region" description="Low complexity" evidence="2">
    <location>
        <begin position="41"/>
        <end position="61"/>
    </location>
</feature>
<feature type="compositionally biased region" description="Acidic residues" evidence="2">
    <location>
        <begin position="160"/>
        <end position="169"/>
    </location>
</feature>
<feature type="compositionally biased region" description="Basic and acidic residues" evidence="2">
    <location>
        <begin position="170"/>
        <end position="184"/>
    </location>
</feature>
<feature type="compositionally biased region" description="Polar residues" evidence="2">
    <location>
        <begin position="351"/>
        <end position="366"/>
    </location>
</feature>
<feature type="compositionally biased region" description="Low complexity" evidence="2">
    <location>
        <begin position="375"/>
        <end position="396"/>
    </location>
</feature>
<feature type="modified residue" description="Phosphoserine" evidence="1">
    <location>
        <position position="130"/>
    </location>
</feature>
<feature type="modified residue" description="Phosphoserine" evidence="1">
    <location>
        <position position="295"/>
    </location>
</feature>
<evidence type="ECO:0000250" key="1">
    <source>
        <dbReference type="UniProtKB" id="Q96MY1"/>
    </source>
</evidence>
<evidence type="ECO:0000256" key="2">
    <source>
        <dbReference type="SAM" id="MobiDB-lite"/>
    </source>
</evidence>
<gene>
    <name type="primary">NOL4L</name>
</gene>
<proteinExistence type="evidence at transcript level"/>
<organism>
    <name type="scientific">Pongo abelii</name>
    <name type="common">Sumatran orangutan</name>
    <name type="synonym">Pongo pygmaeus abelii</name>
    <dbReference type="NCBI Taxonomy" id="9601"/>
    <lineage>
        <taxon>Eukaryota</taxon>
        <taxon>Metazoa</taxon>
        <taxon>Chordata</taxon>
        <taxon>Craniata</taxon>
        <taxon>Vertebrata</taxon>
        <taxon>Euteleostomi</taxon>
        <taxon>Mammalia</taxon>
        <taxon>Eutheria</taxon>
        <taxon>Euarchontoglires</taxon>
        <taxon>Primates</taxon>
        <taxon>Haplorrhini</taxon>
        <taxon>Catarrhini</taxon>
        <taxon>Hominidae</taxon>
        <taxon>Pongo</taxon>
    </lineage>
</organism>
<reference key="1">
    <citation type="submission" date="2004-11" db="EMBL/GenBank/DDBJ databases">
        <authorList>
            <consortium name="The German cDNA consortium"/>
        </authorList>
    </citation>
    <scope>NUCLEOTIDE SEQUENCE [LARGE SCALE MRNA]</scope>
    <source>
        <tissue>Kidney</tissue>
    </source>
</reference>
<sequence length="436" mass="47265">MSDSTWMSADPHLASSLSPSQDERMRSPQNLHSQEDDDSSSESGSGNGSSTLNPSTSSSTQGDPAFPEMNGNGAVAPMDFTTAAEDQPINLCDKLPPATALGTPSYPSDGCGADGLRSRVKYGVKTTPESPPYSSGSYDSIKTEVSGCPEDLTVGRAPTADDDDDDHDDHEDNDKMNDSEGMDPERLKAFNMFVRLFVDENLDRMVPISKQPKEKIQAIIESCSRQFPEFQERARKRIRTYHKSCRRMKKNGMEMTRPTPPHLTSAMAENILAAACESETRKAAKRMRLEIYQSSQDEPIALDKQHSRDSAAITHSTYSLPASSYSQDPVYANGGLNYSYRGYGALSSNLQPPASLQTGNHSNGPTDLSMKGGASTTSTTPTPTPSSTSTSRPVPTAQLSPTEISAVRQLIAGYRESAAFLLRSADELENLILQQN</sequence>
<name>NOL4L_PONAB</name>
<protein>
    <recommendedName>
        <fullName>Nucleolar protein 4-like</fullName>
    </recommendedName>
</protein>
<keyword id="KW-0597">Phosphoprotein</keyword>
<keyword id="KW-1185">Reference proteome</keyword>
<dbReference type="EMBL" id="CR857061">
    <property type="protein sequence ID" value="CAH89368.1"/>
    <property type="molecule type" value="mRNA"/>
</dbReference>
<dbReference type="RefSeq" id="NP_001124573.1">
    <property type="nucleotide sequence ID" value="NM_001131101.1"/>
</dbReference>
<dbReference type="FunCoup" id="Q5RFT9">
    <property type="interactions" value="1361"/>
</dbReference>
<dbReference type="STRING" id="9601.ENSPPYP00000012183"/>
<dbReference type="GeneID" id="100171408"/>
<dbReference type="KEGG" id="pon:100171408"/>
<dbReference type="CTD" id="140688"/>
<dbReference type="eggNOG" id="ENOG502QR3R">
    <property type="taxonomic scope" value="Eukaryota"/>
</dbReference>
<dbReference type="InParanoid" id="Q5RFT9"/>
<dbReference type="OrthoDB" id="10047222at2759"/>
<dbReference type="Proteomes" id="UP000001595">
    <property type="component" value="Unplaced"/>
</dbReference>
<dbReference type="InterPro" id="IPR056549">
    <property type="entry name" value="HTH_NOL4"/>
</dbReference>
<dbReference type="InterPro" id="IPR039788">
    <property type="entry name" value="NOL4/NOL4L"/>
</dbReference>
<dbReference type="PANTHER" id="PTHR12449">
    <property type="entry name" value="DEATH DOMAIN-CONTAINING PROTEIN"/>
    <property type="match status" value="1"/>
</dbReference>
<dbReference type="PANTHER" id="PTHR12449:SF22">
    <property type="entry name" value="NUCLEOLAR PROTEIN 4"/>
    <property type="match status" value="1"/>
</dbReference>
<dbReference type="Pfam" id="PF23079">
    <property type="entry name" value="HTH_NOL4_2nd"/>
    <property type="match status" value="1"/>
</dbReference>